<gene>
    <name evidence="1" type="primary">rsmA</name>
    <name evidence="1" type="synonym">ksgA</name>
    <name type="ordered locus">YE0630</name>
</gene>
<keyword id="KW-0963">Cytoplasm</keyword>
<keyword id="KW-0489">Methyltransferase</keyword>
<keyword id="KW-0694">RNA-binding</keyword>
<keyword id="KW-0698">rRNA processing</keyword>
<keyword id="KW-0949">S-adenosyl-L-methionine</keyword>
<keyword id="KW-0808">Transferase</keyword>
<protein>
    <recommendedName>
        <fullName evidence="1">Ribosomal RNA small subunit methyltransferase A</fullName>
        <ecNumber evidence="1">2.1.1.182</ecNumber>
    </recommendedName>
    <alternativeName>
        <fullName evidence="1">16S rRNA (adenine(1518)-N(6)/adenine(1519)-N(6))-dimethyltransferase</fullName>
    </alternativeName>
    <alternativeName>
        <fullName evidence="1">16S rRNA dimethyladenosine transferase</fullName>
    </alternativeName>
    <alternativeName>
        <fullName evidence="1">16S rRNA dimethylase</fullName>
    </alternativeName>
    <alternativeName>
        <fullName evidence="1">S-adenosylmethionine-6-N', N'-adenosyl(rRNA) dimethyltransferase</fullName>
    </alternativeName>
</protein>
<accession>A1JJF4</accession>
<feature type="chain" id="PRO_1000056689" description="Ribosomal RNA small subunit methyltransferase A">
    <location>
        <begin position="1"/>
        <end position="272"/>
    </location>
</feature>
<feature type="binding site" evidence="1">
    <location>
        <position position="18"/>
    </location>
    <ligand>
        <name>S-adenosyl-L-methionine</name>
        <dbReference type="ChEBI" id="CHEBI:59789"/>
    </ligand>
</feature>
<feature type="binding site" evidence="1">
    <location>
        <position position="20"/>
    </location>
    <ligand>
        <name>S-adenosyl-L-methionine</name>
        <dbReference type="ChEBI" id="CHEBI:59789"/>
    </ligand>
</feature>
<feature type="binding site" evidence="1">
    <location>
        <position position="45"/>
    </location>
    <ligand>
        <name>S-adenosyl-L-methionine</name>
        <dbReference type="ChEBI" id="CHEBI:59789"/>
    </ligand>
</feature>
<feature type="binding site" evidence="1">
    <location>
        <position position="66"/>
    </location>
    <ligand>
        <name>S-adenosyl-L-methionine</name>
        <dbReference type="ChEBI" id="CHEBI:59789"/>
    </ligand>
</feature>
<feature type="binding site" evidence="1">
    <location>
        <position position="91"/>
    </location>
    <ligand>
        <name>S-adenosyl-L-methionine</name>
        <dbReference type="ChEBI" id="CHEBI:59789"/>
    </ligand>
</feature>
<feature type="binding site" evidence="1">
    <location>
        <position position="113"/>
    </location>
    <ligand>
        <name>S-adenosyl-L-methionine</name>
        <dbReference type="ChEBI" id="CHEBI:59789"/>
    </ligand>
</feature>
<dbReference type="EC" id="2.1.1.182" evidence="1"/>
<dbReference type="EMBL" id="AM286415">
    <property type="protein sequence ID" value="CAL10742.1"/>
    <property type="molecule type" value="Genomic_DNA"/>
</dbReference>
<dbReference type="RefSeq" id="WP_011815545.1">
    <property type="nucleotide sequence ID" value="NC_008800.1"/>
</dbReference>
<dbReference type="RefSeq" id="YP_001004982.1">
    <property type="nucleotide sequence ID" value="NC_008800.1"/>
</dbReference>
<dbReference type="SMR" id="A1JJF4"/>
<dbReference type="KEGG" id="yen:YE0630"/>
<dbReference type="PATRIC" id="fig|393305.7.peg.723"/>
<dbReference type="eggNOG" id="COG0030">
    <property type="taxonomic scope" value="Bacteria"/>
</dbReference>
<dbReference type="HOGENOM" id="CLU_041220_0_1_6"/>
<dbReference type="OrthoDB" id="9814755at2"/>
<dbReference type="Proteomes" id="UP000000642">
    <property type="component" value="Chromosome"/>
</dbReference>
<dbReference type="GO" id="GO:0005829">
    <property type="term" value="C:cytosol"/>
    <property type="evidence" value="ECO:0007669"/>
    <property type="project" value="TreeGrafter"/>
</dbReference>
<dbReference type="GO" id="GO:0052908">
    <property type="term" value="F:16S rRNA (adenine(1518)-N(6)/adenine(1519)-N(6))-dimethyltransferase activity"/>
    <property type="evidence" value="ECO:0007669"/>
    <property type="project" value="UniProtKB-EC"/>
</dbReference>
<dbReference type="GO" id="GO:0003723">
    <property type="term" value="F:RNA binding"/>
    <property type="evidence" value="ECO:0007669"/>
    <property type="project" value="UniProtKB-KW"/>
</dbReference>
<dbReference type="FunFam" id="1.10.8.100:FF:000001">
    <property type="entry name" value="Ribosomal RNA small subunit methyltransferase A"/>
    <property type="match status" value="1"/>
</dbReference>
<dbReference type="FunFam" id="3.40.50.150:FF:000006">
    <property type="entry name" value="Ribosomal RNA small subunit methyltransferase A"/>
    <property type="match status" value="1"/>
</dbReference>
<dbReference type="Gene3D" id="1.10.8.100">
    <property type="entry name" value="Ribosomal RNA adenine dimethylase-like, domain 2"/>
    <property type="match status" value="1"/>
</dbReference>
<dbReference type="Gene3D" id="3.40.50.150">
    <property type="entry name" value="Vaccinia Virus protein VP39"/>
    <property type="match status" value="1"/>
</dbReference>
<dbReference type="HAMAP" id="MF_00607">
    <property type="entry name" value="16SrRNA_methyltr_A"/>
    <property type="match status" value="1"/>
</dbReference>
<dbReference type="InterPro" id="IPR001737">
    <property type="entry name" value="KsgA/Erm"/>
</dbReference>
<dbReference type="InterPro" id="IPR023165">
    <property type="entry name" value="rRNA_Ade_diMease-like_C"/>
</dbReference>
<dbReference type="InterPro" id="IPR020596">
    <property type="entry name" value="rRNA_Ade_Mease_Trfase_CS"/>
</dbReference>
<dbReference type="InterPro" id="IPR020598">
    <property type="entry name" value="rRNA_Ade_methylase_Trfase_N"/>
</dbReference>
<dbReference type="InterPro" id="IPR011530">
    <property type="entry name" value="rRNA_adenine_dimethylase"/>
</dbReference>
<dbReference type="InterPro" id="IPR029063">
    <property type="entry name" value="SAM-dependent_MTases_sf"/>
</dbReference>
<dbReference type="NCBIfam" id="TIGR00755">
    <property type="entry name" value="ksgA"/>
    <property type="match status" value="1"/>
</dbReference>
<dbReference type="PANTHER" id="PTHR11727">
    <property type="entry name" value="DIMETHYLADENOSINE TRANSFERASE"/>
    <property type="match status" value="1"/>
</dbReference>
<dbReference type="PANTHER" id="PTHR11727:SF7">
    <property type="entry name" value="DIMETHYLADENOSINE TRANSFERASE-RELATED"/>
    <property type="match status" value="1"/>
</dbReference>
<dbReference type="Pfam" id="PF00398">
    <property type="entry name" value="RrnaAD"/>
    <property type="match status" value="1"/>
</dbReference>
<dbReference type="SMART" id="SM00650">
    <property type="entry name" value="rADc"/>
    <property type="match status" value="1"/>
</dbReference>
<dbReference type="SUPFAM" id="SSF53335">
    <property type="entry name" value="S-adenosyl-L-methionine-dependent methyltransferases"/>
    <property type="match status" value="1"/>
</dbReference>
<dbReference type="PROSITE" id="PS01131">
    <property type="entry name" value="RRNA_A_DIMETH"/>
    <property type="match status" value="1"/>
</dbReference>
<dbReference type="PROSITE" id="PS51689">
    <property type="entry name" value="SAM_RNA_A_N6_MT"/>
    <property type="match status" value="1"/>
</dbReference>
<organism>
    <name type="scientific">Yersinia enterocolitica serotype O:8 / biotype 1B (strain NCTC 13174 / 8081)</name>
    <dbReference type="NCBI Taxonomy" id="393305"/>
    <lineage>
        <taxon>Bacteria</taxon>
        <taxon>Pseudomonadati</taxon>
        <taxon>Pseudomonadota</taxon>
        <taxon>Gammaproteobacteria</taxon>
        <taxon>Enterobacterales</taxon>
        <taxon>Yersiniaceae</taxon>
        <taxon>Yersinia</taxon>
    </lineage>
</organism>
<name>RSMA_YERE8</name>
<reference key="1">
    <citation type="journal article" date="2006" name="PLoS Genet.">
        <title>The complete genome sequence and comparative genome analysis of the high pathogenicity Yersinia enterocolitica strain 8081.</title>
        <authorList>
            <person name="Thomson N.R."/>
            <person name="Howard S."/>
            <person name="Wren B.W."/>
            <person name="Holden M.T.G."/>
            <person name="Crossman L."/>
            <person name="Challis G.L."/>
            <person name="Churcher C."/>
            <person name="Mungall K."/>
            <person name="Brooks K."/>
            <person name="Chillingworth T."/>
            <person name="Feltwell T."/>
            <person name="Abdellah Z."/>
            <person name="Hauser H."/>
            <person name="Jagels K."/>
            <person name="Maddison M."/>
            <person name="Moule S."/>
            <person name="Sanders M."/>
            <person name="Whitehead S."/>
            <person name="Quail M.A."/>
            <person name="Dougan G."/>
            <person name="Parkhill J."/>
            <person name="Prentice M.B."/>
        </authorList>
    </citation>
    <scope>NUCLEOTIDE SEQUENCE [LARGE SCALE GENOMIC DNA]</scope>
    <source>
        <strain>NCTC 13174 / 8081</strain>
    </source>
</reference>
<sequence length="272" mass="30372">MNNRVHQGHFARKRFGQNFLNDQFVIDSIVSAIHPVPGEAVVEIGPGLGALTEPVAARMDHMTVIELDRDLADRLASHPQLKDKLTIHQEDAMKINFSELAELAGQPLRVFGNLPYNISTPLMFHLFSYTSAIRDMHFMLQKEVVNRLVAGPNSKAYGRLTVMAQYYCNVIPVLEVPPTAFTPAPKVDSAVVRLIPHVNTPNPVGDVRMLSRITTQAFNQRRKTVRNSLGDLFTPEQLIELGIDPILRAENISVAQYCKLANWLSAQSTPQE</sequence>
<proteinExistence type="inferred from homology"/>
<comment type="function">
    <text evidence="1">Specifically dimethylates two adjacent adenosines (A1518 and A1519) in the loop of a conserved hairpin near the 3'-end of 16S rRNA in the 30S particle. May play a critical role in biogenesis of 30S subunits.</text>
</comment>
<comment type="catalytic activity">
    <reaction evidence="1">
        <text>adenosine(1518)/adenosine(1519) in 16S rRNA + 4 S-adenosyl-L-methionine = N(6)-dimethyladenosine(1518)/N(6)-dimethyladenosine(1519) in 16S rRNA + 4 S-adenosyl-L-homocysteine + 4 H(+)</text>
        <dbReference type="Rhea" id="RHEA:19609"/>
        <dbReference type="Rhea" id="RHEA-COMP:10232"/>
        <dbReference type="Rhea" id="RHEA-COMP:10233"/>
        <dbReference type="ChEBI" id="CHEBI:15378"/>
        <dbReference type="ChEBI" id="CHEBI:57856"/>
        <dbReference type="ChEBI" id="CHEBI:59789"/>
        <dbReference type="ChEBI" id="CHEBI:74411"/>
        <dbReference type="ChEBI" id="CHEBI:74493"/>
        <dbReference type="EC" id="2.1.1.182"/>
    </reaction>
</comment>
<comment type="subcellular location">
    <subcellularLocation>
        <location evidence="1">Cytoplasm</location>
    </subcellularLocation>
</comment>
<comment type="similarity">
    <text evidence="1">Belongs to the class I-like SAM-binding methyltransferase superfamily. rRNA adenine N(6)-methyltransferase family. RsmA subfamily.</text>
</comment>
<evidence type="ECO:0000255" key="1">
    <source>
        <dbReference type="HAMAP-Rule" id="MF_00607"/>
    </source>
</evidence>